<feature type="chain" id="PRO_0000169445" description="Inner membrane protein YhaI">
    <location>
        <begin position="1"/>
        <end position="118"/>
    </location>
</feature>
<feature type="topological domain" description="Periplasmic" evidence="1">
    <location>
        <begin position="1"/>
        <end position="25"/>
    </location>
</feature>
<feature type="transmembrane region" description="Helical" evidence="1">
    <location>
        <begin position="26"/>
        <end position="46"/>
    </location>
</feature>
<feature type="topological domain" description="Cytoplasmic" evidence="1">
    <location>
        <position position="47"/>
    </location>
</feature>
<feature type="transmembrane region" description="Helical" evidence="1">
    <location>
        <begin position="48"/>
        <end position="68"/>
    </location>
</feature>
<feature type="topological domain" description="Periplasmic" evidence="1">
    <location>
        <begin position="69"/>
        <end position="77"/>
    </location>
</feature>
<feature type="transmembrane region" description="Helical" evidence="1">
    <location>
        <begin position="78"/>
        <end position="98"/>
    </location>
</feature>
<feature type="topological domain" description="Cytoplasmic" evidence="1">
    <location>
        <begin position="99"/>
        <end position="118"/>
    </location>
</feature>
<evidence type="ECO:0000255" key="1"/>
<evidence type="ECO:0000305" key="2"/>
<name>YHAI_ECOLI</name>
<reference key="1">
    <citation type="journal article" date="1997" name="Science">
        <title>The complete genome sequence of Escherichia coli K-12.</title>
        <authorList>
            <person name="Blattner F.R."/>
            <person name="Plunkett G. III"/>
            <person name="Bloch C.A."/>
            <person name="Perna N.T."/>
            <person name="Burland V."/>
            <person name="Riley M."/>
            <person name="Collado-Vides J."/>
            <person name="Glasner J.D."/>
            <person name="Rode C.K."/>
            <person name="Mayhew G.F."/>
            <person name="Gregor J."/>
            <person name="Davis N.W."/>
            <person name="Kirkpatrick H.A."/>
            <person name="Goeden M.A."/>
            <person name="Rose D.J."/>
            <person name="Mau B."/>
            <person name="Shao Y."/>
        </authorList>
    </citation>
    <scope>NUCLEOTIDE SEQUENCE [LARGE SCALE GENOMIC DNA]</scope>
    <source>
        <strain>K12 / MG1655 / ATCC 47076</strain>
    </source>
</reference>
<reference key="2">
    <citation type="journal article" date="2006" name="Mol. Syst. Biol.">
        <title>Highly accurate genome sequences of Escherichia coli K-12 strains MG1655 and W3110.</title>
        <authorList>
            <person name="Hayashi K."/>
            <person name="Morooka N."/>
            <person name="Yamamoto Y."/>
            <person name="Fujita K."/>
            <person name="Isono K."/>
            <person name="Choi S."/>
            <person name="Ohtsubo E."/>
            <person name="Baba T."/>
            <person name="Wanner B.L."/>
            <person name="Mori H."/>
            <person name="Horiuchi T."/>
        </authorList>
    </citation>
    <scope>NUCLEOTIDE SEQUENCE [LARGE SCALE GENOMIC DNA]</scope>
    <source>
        <strain>K12 / W3110 / ATCC 27325 / DSM 5911</strain>
    </source>
</reference>
<reference key="3">
    <citation type="journal article" date="2005" name="Science">
        <title>Global topology analysis of the Escherichia coli inner membrane proteome.</title>
        <authorList>
            <person name="Daley D.O."/>
            <person name="Rapp M."/>
            <person name="Granseth E."/>
            <person name="Melen K."/>
            <person name="Drew D."/>
            <person name="von Heijne G."/>
        </authorList>
    </citation>
    <scope>TOPOLOGY [LARGE SCALE ANALYSIS]</scope>
    <source>
        <strain>K12 / MG1655 / ATCC 47076</strain>
    </source>
</reference>
<protein>
    <recommendedName>
        <fullName>Inner membrane protein YhaI</fullName>
    </recommendedName>
</protein>
<dbReference type="EMBL" id="U18997">
    <property type="protein sequence ID" value="AAA57908.1"/>
    <property type="molecule type" value="Genomic_DNA"/>
</dbReference>
<dbReference type="EMBL" id="U00096">
    <property type="protein sequence ID" value="AAC76139.1"/>
    <property type="molecule type" value="Genomic_DNA"/>
</dbReference>
<dbReference type="EMBL" id="AP009048">
    <property type="protein sequence ID" value="BAE77154.1"/>
    <property type="molecule type" value="Genomic_DNA"/>
</dbReference>
<dbReference type="PIR" id="E65099">
    <property type="entry name" value="E65099"/>
</dbReference>
<dbReference type="RefSeq" id="NP_417575.1">
    <property type="nucleotide sequence ID" value="NC_000913.3"/>
</dbReference>
<dbReference type="RefSeq" id="WP_001198807.1">
    <property type="nucleotide sequence ID" value="NZ_LN832404.1"/>
</dbReference>
<dbReference type="BioGRID" id="4259258">
    <property type="interactions" value="7"/>
</dbReference>
<dbReference type="FunCoup" id="P64592">
    <property type="interactions" value="30"/>
</dbReference>
<dbReference type="STRING" id="511145.b3104"/>
<dbReference type="TCDB" id="9.B.124.1.1">
    <property type="family name" value="the duf805 or pf05656 (duf805) family"/>
</dbReference>
<dbReference type="PaxDb" id="511145-b3104"/>
<dbReference type="DNASU" id="947612"/>
<dbReference type="EnsemblBacteria" id="AAC76139">
    <property type="protein sequence ID" value="AAC76139"/>
    <property type="gene ID" value="b3104"/>
</dbReference>
<dbReference type="GeneID" id="947612"/>
<dbReference type="KEGG" id="ecj:JW3075"/>
<dbReference type="KEGG" id="eco:b3104"/>
<dbReference type="KEGG" id="ecoc:C3026_16945"/>
<dbReference type="PATRIC" id="fig|1411691.4.peg.3624"/>
<dbReference type="EchoBASE" id="EB2604"/>
<dbReference type="eggNOG" id="COG3152">
    <property type="taxonomic scope" value="Bacteria"/>
</dbReference>
<dbReference type="HOGENOM" id="CLU_093674_4_1_6"/>
<dbReference type="InParanoid" id="P64592"/>
<dbReference type="OMA" id="WQLIGLI"/>
<dbReference type="OrthoDB" id="9812349at2"/>
<dbReference type="PhylomeDB" id="P64592"/>
<dbReference type="BioCyc" id="EcoCyc:G7618-MONOMER"/>
<dbReference type="PRO" id="PR:P64592"/>
<dbReference type="Proteomes" id="UP000000625">
    <property type="component" value="Chromosome"/>
</dbReference>
<dbReference type="GO" id="GO:0005886">
    <property type="term" value="C:plasma membrane"/>
    <property type="evidence" value="ECO:0000314"/>
    <property type="project" value="EcoCyc"/>
</dbReference>
<dbReference type="InterPro" id="IPR008523">
    <property type="entry name" value="DUF805"/>
</dbReference>
<dbReference type="PANTHER" id="PTHR34980:SF2">
    <property type="entry name" value="INNER MEMBRANE PROTEIN YHAH-RELATED"/>
    <property type="match status" value="1"/>
</dbReference>
<dbReference type="PANTHER" id="PTHR34980">
    <property type="entry name" value="INNER MEMBRANE PROTEIN-RELATED-RELATED"/>
    <property type="match status" value="1"/>
</dbReference>
<dbReference type="Pfam" id="PF05656">
    <property type="entry name" value="DUF805"/>
    <property type="match status" value="1"/>
</dbReference>
<keyword id="KW-0997">Cell inner membrane</keyword>
<keyword id="KW-1003">Cell membrane</keyword>
<keyword id="KW-0472">Membrane</keyword>
<keyword id="KW-1185">Reference proteome</keyword>
<keyword id="KW-0812">Transmembrane</keyword>
<keyword id="KW-1133">Transmembrane helix</keyword>
<gene>
    <name type="primary">yhaI</name>
    <name type="ordered locus">b3104</name>
    <name type="ordered locus">JW3075</name>
</gene>
<proteinExistence type="evidence at protein level"/>
<accession>P64592</accession>
<accession>P42622</accession>
<accession>Q2M9A2</accession>
<sequence length="118" mass="13456">MQWYLSVLKNYVGFSGRARRKEYWMFTLINAIVGAIINVIQLILGLELPYLSMLYLLATFLPVLALAIRRLHDTDRSGAWALLFFVPFIGWLVLLVFFCTEGTSGSNRYGNDPKFGSN</sequence>
<comment type="subcellular location">
    <subcellularLocation>
        <location>Cell inner membrane</location>
        <topology>Multi-pass membrane protein</topology>
    </subcellularLocation>
</comment>
<comment type="similarity">
    <text evidence="2">To E.coli YhaH.</text>
</comment>
<organism>
    <name type="scientific">Escherichia coli (strain K12)</name>
    <dbReference type="NCBI Taxonomy" id="83333"/>
    <lineage>
        <taxon>Bacteria</taxon>
        <taxon>Pseudomonadati</taxon>
        <taxon>Pseudomonadota</taxon>
        <taxon>Gammaproteobacteria</taxon>
        <taxon>Enterobacterales</taxon>
        <taxon>Enterobacteriaceae</taxon>
        <taxon>Escherichia</taxon>
    </lineage>
</organism>